<feature type="signal peptide" evidence="2">
    <location>
        <begin position="1"/>
        <end position="24"/>
    </location>
</feature>
<feature type="propeptide" id="PRO_0000446705" evidence="5">
    <location>
        <begin position="25"/>
        <end position="28"/>
    </location>
</feature>
<feature type="peptide" id="PRO_5007368324" description="U-scoloptoxin-Er1.1b" evidence="1">
    <location>
        <begin position="29"/>
        <end position="46"/>
    </location>
</feature>
<feature type="chain" id="PRO_0000446706" description="U-scoloptoxin-Er1.2d" evidence="1">
    <location>
        <begin position="47"/>
        <end position="77"/>
    </location>
</feature>
<dbReference type="EMBL" id="KF130734">
    <property type="protein sequence ID" value="AHY22585.1"/>
    <property type="molecule type" value="mRNA"/>
</dbReference>
<dbReference type="EMBL" id="KF130735">
    <property type="protein sequence ID" value="AHY22586.1"/>
    <property type="molecule type" value="mRNA"/>
</dbReference>
<dbReference type="GO" id="GO:0005576">
    <property type="term" value="C:extracellular region"/>
    <property type="evidence" value="ECO:0007669"/>
    <property type="project" value="UniProtKB-SubCell"/>
</dbReference>
<dbReference type="GO" id="GO:0090729">
    <property type="term" value="F:toxin activity"/>
    <property type="evidence" value="ECO:0007669"/>
    <property type="project" value="UniProtKB-KW"/>
</dbReference>
<reference key="1">
    <citation type="journal article" date="2014" name="J. Proteomics">
        <title>Multifunctional warheads: diversification of the toxin arsenal of centipedes via novel multidomain transcripts.</title>
        <authorList>
            <person name="Undheim E.A."/>
            <person name="Sunagar K."/>
            <person name="Hamilton B.R."/>
            <person name="Jones A."/>
            <person name="Venter D.J."/>
            <person name="Fry B.G."/>
            <person name="King G.F."/>
        </authorList>
    </citation>
    <scope>NUCLEOTIDE SEQUENCE [MRNA]</scope>
    <source>
        <tissue>Venom gland</tissue>
    </source>
</reference>
<protein>
    <recommendedName>
        <fullName evidence="5">U-scoloptoxin(04)-Er1e</fullName>
        <shortName evidence="5">U-SLPTX(04)-Er1e</shortName>
    </recommendedName>
    <alternativeName>
        <fullName evidence="7">U-scoloptoxin-Er1.1b2d</fullName>
        <shortName evidence="7">U-SLPTX-Er1.1b2d</shortName>
    </alternativeName>
    <component>
        <recommendedName>
            <fullName evidence="4">U-scoloptoxin-Er1.1b</fullName>
        </recommendedName>
    </component>
    <component>
        <recommendedName>
            <fullName evidence="4">U-scoloptoxin-Er1.2d</fullName>
        </recommendedName>
    </component>
</protein>
<accession>A0A023W090</accession>
<sequence>MTRHLIFAAMLLVCLFVCWNAVGARDARSAFSLEETAQDEHVMEERVFINPAGNREKNACLENCKSLPNCKNYEFCSK</sequence>
<keyword id="KW-1015">Disulfide bond</keyword>
<keyword id="KW-0964">Secreted</keyword>
<keyword id="KW-0732">Signal</keyword>
<keyword id="KW-0800">Toxin</keyword>
<comment type="subcellular location">
    <subcellularLocation>
        <location evidence="3">Secreted</location>
    </subcellularLocation>
    <text evidence="1">The mature toxins are clearly liberated from the multidomain precursors in the venom gland prior to venom expulsion and not by venom proteases upon secretion.</text>
</comment>
<comment type="tissue specificity">
    <text evidence="6">Expressed by the venom gland.</text>
</comment>
<comment type="PTM">
    <text evidence="5">Contains 2 disulfide bonds.</text>
</comment>
<comment type="similarity">
    <text evidence="5">Belongs to the scoloptoxin-04 family.</text>
</comment>
<proteinExistence type="inferred from homology"/>
<evidence type="ECO:0000250" key="1">
    <source>
        <dbReference type="UniProtKB" id="A0A023VZM6"/>
    </source>
</evidence>
<evidence type="ECO:0000255" key="2"/>
<evidence type="ECO:0000269" key="3">
    <source>
    </source>
</evidence>
<evidence type="ECO:0000303" key="4">
    <source>
    </source>
</evidence>
<evidence type="ECO:0000305" key="5"/>
<evidence type="ECO:0000305" key="6">
    <source>
    </source>
</evidence>
<evidence type="ECO:0000312" key="7">
    <source>
        <dbReference type="EMBL" id="AHY22586.1"/>
    </source>
</evidence>
<organism>
    <name type="scientific">Ethmostigmus rubripes</name>
    <name type="common">Giant centipede</name>
    <dbReference type="NCBI Taxonomy" id="62613"/>
    <lineage>
        <taxon>Eukaryota</taxon>
        <taxon>Metazoa</taxon>
        <taxon>Ecdysozoa</taxon>
        <taxon>Arthropoda</taxon>
        <taxon>Myriapoda</taxon>
        <taxon>Chilopoda</taxon>
        <taxon>Pleurostigmophora</taxon>
        <taxon>Scolopendromorpha</taxon>
        <taxon>Scolopendridae</taxon>
        <taxon>Ethmostigmus</taxon>
    </lineage>
</organism>
<name>TX41E_ETHRU</name>